<proteinExistence type="inferred from homology"/>
<reference key="1">
    <citation type="submission" date="2009-04" db="EMBL/GenBank/DDBJ databases">
        <title>Genome sequence of Bacillus anthracis A0248.</title>
        <authorList>
            <person name="Dodson R.J."/>
            <person name="Munk A.C."/>
            <person name="Bruce D."/>
            <person name="Detter C."/>
            <person name="Tapia R."/>
            <person name="Sutton G."/>
            <person name="Sims D."/>
            <person name="Brettin T."/>
        </authorList>
    </citation>
    <scope>NUCLEOTIDE SEQUENCE [LARGE SCALE GENOMIC DNA]</scope>
    <source>
        <strain>A0248</strain>
    </source>
</reference>
<comment type="function">
    <text evidence="1">Effects nucleoid occlusion by binding relatively nonspecifically to DNA and preventing the assembly of the division machinery in the vicinity of the nucleoid, especially under conditions that disturb the cell cycle. It helps to coordinate cell division and chromosome segregation by preventing the formation of the Z ring through the nucleoid, which would cause chromosome breakage.</text>
</comment>
<comment type="subcellular location">
    <subcellularLocation>
        <location evidence="1">Cytoplasm</location>
        <location evidence="1">Nucleoid</location>
    </subcellularLocation>
</comment>
<comment type="similarity">
    <text evidence="1">Belongs to the ParB family.</text>
</comment>
<dbReference type="EMBL" id="CP001598">
    <property type="protein sequence ID" value="ACQ50920.1"/>
    <property type="molecule type" value="Genomic_DNA"/>
</dbReference>
<dbReference type="RefSeq" id="WP_000799028.1">
    <property type="nucleotide sequence ID" value="NC_012659.1"/>
</dbReference>
<dbReference type="SMR" id="C3P3F2"/>
<dbReference type="GeneID" id="45025309"/>
<dbReference type="KEGG" id="bai:BAA_5765"/>
<dbReference type="HOGENOM" id="CLU_023853_0_1_9"/>
<dbReference type="GO" id="GO:0005694">
    <property type="term" value="C:chromosome"/>
    <property type="evidence" value="ECO:0007669"/>
    <property type="project" value="TreeGrafter"/>
</dbReference>
<dbReference type="GO" id="GO:0005737">
    <property type="term" value="C:cytoplasm"/>
    <property type="evidence" value="ECO:0007669"/>
    <property type="project" value="UniProtKB-UniRule"/>
</dbReference>
<dbReference type="GO" id="GO:0009295">
    <property type="term" value="C:nucleoid"/>
    <property type="evidence" value="ECO:0007669"/>
    <property type="project" value="UniProtKB-SubCell"/>
</dbReference>
<dbReference type="GO" id="GO:0003677">
    <property type="term" value="F:DNA binding"/>
    <property type="evidence" value="ECO:0007669"/>
    <property type="project" value="UniProtKB-UniRule"/>
</dbReference>
<dbReference type="GO" id="GO:0007059">
    <property type="term" value="P:chromosome segregation"/>
    <property type="evidence" value="ECO:0007669"/>
    <property type="project" value="TreeGrafter"/>
</dbReference>
<dbReference type="GO" id="GO:0000917">
    <property type="term" value="P:division septum assembly"/>
    <property type="evidence" value="ECO:0007669"/>
    <property type="project" value="UniProtKB-KW"/>
</dbReference>
<dbReference type="GO" id="GO:0045881">
    <property type="term" value="P:positive regulation of sporulation resulting in formation of a cellular spore"/>
    <property type="evidence" value="ECO:0007669"/>
    <property type="project" value="TreeGrafter"/>
</dbReference>
<dbReference type="CDD" id="cd16393">
    <property type="entry name" value="SPO0J_N"/>
    <property type="match status" value="1"/>
</dbReference>
<dbReference type="FunFam" id="1.10.10.2830:FF:000001">
    <property type="entry name" value="Chromosome partitioning protein ParB"/>
    <property type="match status" value="1"/>
</dbReference>
<dbReference type="FunFam" id="3.90.1530.30:FF:000001">
    <property type="entry name" value="Chromosome partitioning protein ParB"/>
    <property type="match status" value="1"/>
</dbReference>
<dbReference type="Gene3D" id="1.10.10.2830">
    <property type="match status" value="1"/>
</dbReference>
<dbReference type="Gene3D" id="3.90.1530.30">
    <property type="match status" value="1"/>
</dbReference>
<dbReference type="HAMAP" id="MF_02015">
    <property type="entry name" value="ParB_Noc"/>
    <property type="match status" value="1"/>
</dbReference>
<dbReference type="InterPro" id="IPR050336">
    <property type="entry name" value="Chromosome_partition/occlusion"/>
</dbReference>
<dbReference type="InterPro" id="IPR041468">
    <property type="entry name" value="HTH_ParB/Spo0J"/>
</dbReference>
<dbReference type="InterPro" id="IPR023705">
    <property type="entry name" value="Nucleoid_occlusion_protein"/>
</dbReference>
<dbReference type="InterPro" id="IPR004437">
    <property type="entry name" value="ParB/RepB/Spo0J"/>
</dbReference>
<dbReference type="InterPro" id="IPR003115">
    <property type="entry name" value="ParB/Sulfiredoxin_dom"/>
</dbReference>
<dbReference type="InterPro" id="IPR036086">
    <property type="entry name" value="ParB/Sulfiredoxin_sf"/>
</dbReference>
<dbReference type="NCBIfam" id="TIGR04285">
    <property type="entry name" value="nucleoid_noc"/>
    <property type="match status" value="1"/>
</dbReference>
<dbReference type="NCBIfam" id="TIGR00180">
    <property type="entry name" value="parB_part"/>
    <property type="match status" value="1"/>
</dbReference>
<dbReference type="PANTHER" id="PTHR33375">
    <property type="entry name" value="CHROMOSOME-PARTITIONING PROTEIN PARB-RELATED"/>
    <property type="match status" value="1"/>
</dbReference>
<dbReference type="PANTHER" id="PTHR33375:SF8">
    <property type="entry name" value="NUCLEOID OCCLUSION PROTEIN"/>
    <property type="match status" value="1"/>
</dbReference>
<dbReference type="Pfam" id="PF17762">
    <property type="entry name" value="HTH_ParB"/>
    <property type="match status" value="1"/>
</dbReference>
<dbReference type="Pfam" id="PF02195">
    <property type="entry name" value="ParBc"/>
    <property type="match status" value="1"/>
</dbReference>
<dbReference type="SMART" id="SM00470">
    <property type="entry name" value="ParB"/>
    <property type="match status" value="1"/>
</dbReference>
<dbReference type="SUPFAM" id="SSF110849">
    <property type="entry name" value="ParB/Sulfiredoxin"/>
    <property type="match status" value="1"/>
</dbReference>
<sequence length="290" mass="33617">MKNTFSRLFGFGDKESEFELQDESHEEIDKKVYEEIQEIPIVNITPNRYQPRTVFDDARIEELALTIRTHGLIQPIVVRQYEDDKYEIIAGERRFRAATKLGWEKVPAIIKNLNDTETASVALIENLQREELTAIEEAVAYQKLIELHNLTQEALAQRLGKGQSTIANKLRLLKLPEEIKSALLEKSITERHARALIPLKNEELQLKVLQEIVEKQLNVKQTEERITKLLEEAKPKRKAKQKAVSRDTRIAMNTIRQSLQMVADSGLNVNSEEEEFDEYYQITIQIPKKK</sequence>
<keyword id="KW-0131">Cell cycle</keyword>
<keyword id="KW-0132">Cell division</keyword>
<keyword id="KW-0963">Cytoplasm</keyword>
<keyword id="KW-0238">DNA-binding</keyword>
<keyword id="KW-0717">Septation</keyword>
<feature type="chain" id="PRO_1000189527" description="Nucleoid occlusion protein">
    <location>
        <begin position="1"/>
        <end position="290"/>
    </location>
</feature>
<feature type="DNA-binding region" description="H-T-H motif" evidence="1">
    <location>
        <begin position="153"/>
        <end position="172"/>
    </location>
</feature>
<accession>C3P3F2</accession>
<organism>
    <name type="scientific">Bacillus anthracis (strain A0248)</name>
    <dbReference type="NCBI Taxonomy" id="592021"/>
    <lineage>
        <taxon>Bacteria</taxon>
        <taxon>Bacillati</taxon>
        <taxon>Bacillota</taxon>
        <taxon>Bacilli</taxon>
        <taxon>Bacillales</taxon>
        <taxon>Bacillaceae</taxon>
        <taxon>Bacillus</taxon>
        <taxon>Bacillus cereus group</taxon>
    </lineage>
</organism>
<protein>
    <recommendedName>
        <fullName evidence="1">Nucleoid occlusion protein</fullName>
        <shortName evidence="1">Noc</shortName>
    </recommendedName>
</protein>
<gene>
    <name evidence="1" type="primary">noc</name>
    <name type="ordered locus">BAA_5765</name>
</gene>
<evidence type="ECO:0000255" key="1">
    <source>
        <dbReference type="HAMAP-Rule" id="MF_02015"/>
    </source>
</evidence>
<name>NOC_BACAA</name>